<comment type="function">
    <text evidence="1">Phosphorolytic 3'-5' exoribonuclease that plays an important role in tRNA 3'-end maturation. Removes nucleotide residues following the 3'-CCA terminus of tRNAs; can also add nucleotides to the ends of RNA molecules by using nucleoside diphosphates as substrates, but this may not be physiologically important. Probably plays a role in initiation of 16S rRNA degradation (leading to ribosome degradation) during starvation.</text>
</comment>
<comment type="catalytic activity">
    <reaction evidence="1">
        <text>tRNA(n+1) + phosphate = tRNA(n) + a ribonucleoside 5'-diphosphate</text>
        <dbReference type="Rhea" id="RHEA:10628"/>
        <dbReference type="Rhea" id="RHEA-COMP:17343"/>
        <dbReference type="Rhea" id="RHEA-COMP:17344"/>
        <dbReference type="ChEBI" id="CHEBI:43474"/>
        <dbReference type="ChEBI" id="CHEBI:57930"/>
        <dbReference type="ChEBI" id="CHEBI:173114"/>
        <dbReference type="EC" id="2.7.7.56"/>
    </reaction>
</comment>
<comment type="subunit">
    <text evidence="1">Homohexameric ring arranged as a trimer of dimers.</text>
</comment>
<comment type="similarity">
    <text evidence="1">Belongs to the RNase PH family.</text>
</comment>
<accession>B2VF76</accession>
<gene>
    <name evidence="1" type="primary">rph</name>
    <name type="ordered locus">ETA_00610</name>
</gene>
<proteinExistence type="inferred from homology"/>
<keyword id="KW-0548">Nucleotidyltransferase</keyword>
<keyword id="KW-1185">Reference proteome</keyword>
<keyword id="KW-0694">RNA-binding</keyword>
<keyword id="KW-0698">rRNA processing</keyword>
<keyword id="KW-0808">Transferase</keyword>
<keyword id="KW-0819">tRNA processing</keyword>
<keyword id="KW-0820">tRNA-binding</keyword>
<name>RNPH_ERWT9</name>
<dbReference type="EC" id="2.7.7.56" evidence="1"/>
<dbReference type="EMBL" id="CU468135">
    <property type="protein sequence ID" value="CAO95107.1"/>
    <property type="molecule type" value="Genomic_DNA"/>
</dbReference>
<dbReference type="RefSeq" id="WP_012439835.1">
    <property type="nucleotide sequence ID" value="NC_010694.1"/>
</dbReference>
<dbReference type="SMR" id="B2VF76"/>
<dbReference type="STRING" id="465817.ETA_00610"/>
<dbReference type="KEGG" id="eta:ETA_00610"/>
<dbReference type="eggNOG" id="COG0689">
    <property type="taxonomic scope" value="Bacteria"/>
</dbReference>
<dbReference type="HOGENOM" id="CLU_050858_0_0_6"/>
<dbReference type="OrthoDB" id="9802265at2"/>
<dbReference type="Proteomes" id="UP000001726">
    <property type="component" value="Chromosome"/>
</dbReference>
<dbReference type="GO" id="GO:0000175">
    <property type="term" value="F:3'-5'-RNA exonuclease activity"/>
    <property type="evidence" value="ECO:0007669"/>
    <property type="project" value="UniProtKB-UniRule"/>
</dbReference>
<dbReference type="GO" id="GO:0000049">
    <property type="term" value="F:tRNA binding"/>
    <property type="evidence" value="ECO:0007669"/>
    <property type="project" value="UniProtKB-UniRule"/>
</dbReference>
<dbReference type="GO" id="GO:0009022">
    <property type="term" value="F:tRNA nucleotidyltransferase activity"/>
    <property type="evidence" value="ECO:0007669"/>
    <property type="project" value="UniProtKB-UniRule"/>
</dbReference>
<dbReference type="GO" id="GO:0016075">
    <property type="term" value="P:rRNA catabolic process"/>
    <property type="evidence" value="ECO:0007669"/>
    <property type="project" value="UniProtKB-UniRule"/>
</dbReference>
<dbReference type="GO" id="GO:0006364">
    <property type="term" value="P:rRNA processing"/>
    <property type="evidence" value="ECO:0007669"/>
    <property type="project" value="UniProtKB-KW"/>
</dbReference>
<dbReference type="GO" id="GO:0008033">
    <property type="term" value="P:tRNA processing"/>
    <property type="evidence" value="ECO:0007669"/>
    <property type="project" value="UniProtKB-UniRule"/>
</dbReference>
<dbReference type="CDD" id="cd11362">
    <property type="entry name" value="RNase_PH_bact"/>
    <property type="match status" value="1"/>
</dbReference>
<dbReference type="FunFam" id="3.30.230.70:FF:000003">
    <property type="entry name" value="Ribonuclease PH"/>
    <property type="match status" value="1"/>
</dbReference>
<dbReference type="Gene3D" id="3.30.230.70">
    <property type="entry name" value="GHMP Kinase, N-terminal domain"/>
    <property type="match status" value="1"/>
</dbReference>
<dbReference type="HAMAP" id="MF_00564">
    <property type="entry name" value="RNase_PH"/>
    <property type="match status" value="1"/>
</dbReference>
<dbReference type="InterPro" id="IPR001247">
    <property type="entry name" value="ExoRNase_PH_dom1"/>
</dbReference>
<dbReference type="InterPro" id="IPR015847">
    <property type="entry name" value="ExoRNase_PH_dom2"/>
</dbReference>
<dbReference type="InterPro" id="IPR036345">
    <property type="entry name" value="ExoRNase_PH_dom2_sf"/>
</dbReference>
<dbReference type="InterPro" id="IPR027408">
    <property type="entry name" value="PNPase/RNase_PH_dom_sf"/>
</dbReference>
<dbReference type="InterPro" id="IPR020568">
    <property type="entry name" value="Ribosomal_Su5_D2-typ_SF"/>
</dbReference>
<dbReference type="InterPro" id="IPR050080">
    <property type="entry name" value="RNase_PH"/>
</dbReference>
<dbReference type="InterPro" id="IPR002381">
    <property type="entry name" value="RNase_PH_bac-type"/>
</dbReference>
<dbReference type="InterPro" id="IPR018336">
    <property type="entry name" value="RNase_PH_CS"/>
</dbReference>
<dbReference type="NCBIfam" id="TIGR01966">
    <property type="entry name" value="RNasePH"/>
    <property type="match status" value="1"/>
</dbReference>
<dbReference type="PANTHER" id="PTHR11953">
    <property type="entry name" value="EXOSOME COMPLEX COMPONENT"/>
    <property type="match status" value="1"/>
</dbReference>
<dbReference type="PANTHER" id="PTHR11953:SF0">
    <property type="entry name" value="EXOSOME COMPLEX COMPONENT RRP41"/>
    <property type="match status" value="1"/>
</dbReference>
<dbReference type="Pfam" id="PF01138">
    <property type="entry name" value="RNase_PH"/>
    <property type="match status" value="1"/>
</dbReference>
<dbReference type="Pfam" id="PF03725">
    <property type="entry name" value="RNase_PH_C"/>
    <property type="match status" value="1"/>
</dbReference>
<dbReference type="SUPFAM" id="SSF55666">
    <property type="entry name" value="Ribonuclease PH domain 2-like"/>
    <property type="match status" value="1"/>
</dbReference>
<dbReference type="SUPFAM" id="SSF54211">
    <property type="entry name" value="Ribosomal protein S5 domain 2-like"/>
    <property type="match status" value="1"/>
</dbReference>
<dbReference type="PROSITE" id="PS01277">
    <property type="entry name" value="RIBONUCLEASE_PH"/>
    <property type="match status" value="1"/>
</dbReference>
<protein>
    <recommendedName>
        <fullName evidence="1">Ribonuclease PH</fullName>
        <shortName evidence="1">RNase PH</shortName>
        <ecNumber evidence="1">2.7.7.56</ecNumber>
    </recommendedName>
    <alternativeName>
        <fullName evidence="1">tRNA nucleotidyltransferase</fullName>
    </alternativeName>
</protein>
<organism>
    <name type="scientific">Erwinia tasmaniensis (strain DSM 17950 / CFBP 7177 / CIP 109463 / NCPPB 4357 / Et1/99)</name>
    <dbReference type="NCBI Taxonomy" id="465817"/>
    <lineage>
        <taxon>Bacteria</taxon>
        <taxon>Pseudomonadati</taxon>
        <taxon>Pseudomonadota</taxon>
        <taxon>Gammaproteobacteria</taxon>
        <taxon>Enterobacterales</taxon>
        <taxon>Erwiniaceae</taxon>
        <taxon>Erwinia</taxon>
    </lineage>
</organism>
<reference key="1">
    <citation type="journal article" date="2008" name="Environ. Microbiol.">
        <title>The genome of Erwinia tasmaniensis strain Et1/99, a non-pathogenic bacterium in the genus Erwinia.</title>
        <authorList>
            <person name="Kube M."/>
            <person name="Migdoll A.M."/>
            <person name="Mueller I."/>
            <person name="Kuhl H."/>
            <person name="Beck A."/>
            <person name="Reinhardt R."/>
            <person name="Geider K."/>
        </authorList>
    </citation>
    <scope>NUCLEOTIDE SEQUENCE [LARGE SCALE GENOMIC DNA]</scope>
    <source>
        <strain>DSM 17950 / CFBP 7177 / CIP 109463 / NCPPB 4357 / Et1/99</strain>
    </source>
</reference>
<sequence length="238" mass="25344">MRPSGRSAQQVRPVTLTRHYTKHAEGSVLVEFGDTKVLCTATIEEGVPRFLKGKGQGWVTAEYGMLPRATHSRNAREAAKGKQGGRTLEIQRLIARSLRAAIDLKVLGEFTITLDCDVLQADGGTRTASITGACVALADALNHLVSTGKLKANPMKGMVAAISVGIVNGEALCDLEYVEDAAAETDMNVVMTEDGRMIEVQGTAEGEPFSHEELLKLLELARGGIDTLVAAQKAALTD</sequence>
<evidence type="ECO:0000255" key="1">
    <source>
        <dbReference type="HAMAP-Rule" id="MF_00564"/>
    </source>
</evidence>
<feature type="chain" id="PRO_1000129342" description="Ribonuclease PH">
    <location>
        <begin position="1"/>
        <end position="238"/>
    </location>
</feature>
<feature type="binding site" evidence="1">
    <location>
        <position position="86"/>
    </location>
    <ligand>
        <name>phosphate</name>
        <dbReference type="ChEBI" id="CHEBI:43474"/>
        <note>substrate</note>
    </ligand>
</feature>
<feature type="binding site" evidence="1">
    <location>
        <begin position="124"/>
        <end position="126"/>
    </location>
    <ligand>
        <name>phosphate</name>
        <dbReference type="ChEBI" id="CHEBI:43474"/>
        <note>substrate</note>
    </ligand>
</feature>